<reference key="1">
    <citation type="journal article" date="2001" name="J. Bacteriol.">
        <title>Genome of the bacterium Streptococcus pneumoniae strain R6.</title>
        <authorList>
            <person name="Hoskins J."/>
            <person name="Alborn W.E. Jr."/>
            <person name="Arnold J."/>
            <person name="Blaszczak L.C."/>
            <person name="Burgett S."/>
            <person name="DeHoff B.S."/>
            <person name="Estrem S.T."/>
            <person name="Fritz L."/>
            <person name="Fu D.-J."/>
            <person name="Fuller W."/>
            <person name="Geringer C."/>
            <person name="Gilmour R."/>
            <person name="Glass J.S."/>
            <person name="Khoja H."/>
            <person name="Kraft A.R."/>
            <person name="Lagace R.E."/>
            <person name="LeBlanc D.J."/>
            <person name="Lee L.N."/>
            <person name="Lefkowitz E.J."/>
            <person name="Lu J."/>
            <person name="Matsushima P."/>
            <person name="McAhren S.M."/>
            <person name="McHenney M."/>
            <person name="McLeaster K."/>
            <person name="Mundy C.W."/>
            <person name="Nicas T.I."/>
            <person name="Norris F.H."/>
            <person name="O'Gara M."/>
            <person name="Peery R.B."/>
            <person name="Robertson G.T."/>
            <person name="Rockey P."/>
            <person name="Sun P.-M."/>
            <person name="Winkler M.E."/>
            <person name="Yang Y."/>
            <person name="Young-Bellido M."/>
            <person name="Zhao G."/>
            <person name="Zook C.A."/>
            <person name="Baltz R.H."/>
            <person name="Jaskunas S.R."/>
            <person name="Rosteck P.R. Jr."/>
            <person name="Skatrud P.L."/>
            <person name="Glass J.I."/>
        </authorList>
    </citation>
    <scope>NUCLEOTIDE SEQUENCE [LARGE SCALE GENOMIC DNA]</scope>
    <source>
        <strain>ATCC BAA-255 / R6</strain>
    </source>
</reference>
<reference key="2">
    <citation type="journal article" date="2009" name="J. Biol. Chem.">
        <title>Substrate specificity of streptococcal unsaturated glucuronyl hydrolases for sulfated glycosaminoglycan.</title>
        <authorList>
            <person name="Maruyama Y."/>
            <person name="Nakamichi Y."/>
            <person name="Itoh T."/>
            <person name="Mikami B."/>
            <person name="Hashimoto W."/>
            <person name="Murata K."/>
        </authorList>
    </citation>
    <scope>FUNCTION</scope>
    <scope>CATALYTIC ACTIVITY</scope>
    <scope>SUBUNIT</scope>
    <scope>BIOPHYSICOCHEMICAL PROPERTIES</scope>
    <source>
        <strain>ATCC BAA-255 / R6</strain>
    </source>
</reference>
<comment type="function">
    <text evidence="2">Catalyzes the hydrolysis of unsaturated hyaluronate and chondroitin disaccharides. Also degrades unsaturated heparin disaccharides. Releases 4-deoxy-4,5-didehydro D-glucuronic acid or 4-deoxy-4,5-didehydro L-iduronic acid from chondroitin disaccharides, hyaluronan disaccharides and heparin disaccharides and cleaves both glycosidic (1-&gt;3) and (1-&gt;4) bonds. Prefers sulfated glycosaminoglycans compared to unsulfated glycosaminoglycans. Probably required for mammalian cells invasion through the degradation of extracellular sulfated glycosaminoglycans such as chondroitin and hyaluronan.</text>
</comment>
<comment type="catalytic activity">
    <reaction evidence="2">
        <text>beta-D-4-deoxy-Delta(4)-GlcpA-(1-&gt;3)-beta-D-GalpNAc6S + H2O = N-acetyl-beta-D-galactosamine 6-sulfate + 5-dehydro-4-deoxy-D-glucuronate</text>
        <dbReference type="Rhea" id="RHEA:31647"/>
        <dbReference type="ChEBI" id="CHEBI:15377"/>
        <dbReference type="ChEBI" id="CHEBI:17117"/>
        <dbReference type="ChEBI" id="CHEBI:63267"/>
        <dbReference type="ChEBI" id="CHEBI:63270"/>
        <dbReference type="EC" id="3.2.1.180"/>
    </reaction>
</comment>
<comment type="biophysicochemical properties">
    <kinetics>
        <KM evidence="2">0.18 mM for unsaturated chondroitin disaccharide sulfated at C-6 position of GalNAc residue</KM>
        <text>kcat is 1.3 sec(-1) with unsaturated chondroitin disaccharide sulfated at C-6 position of GalNAc residue.</text>
    </kinetics>
    <phDependence>
        <text evidence="2">Optimum pH is 5.5.</text>
    </phDependence>
    <temperatureDependence>
        <text evidence="2">Optimum temperature is 37 degrees Celsius.</text>
    </temperatureDependence>
</comment>
<comment type="subunit">
    <text evidence="2">Monomer.</text>
</comment>
<comment type="similarity">
    <text evidence="3">Belongs to the glycosyl hydrolase 88 family.</text>
</comment>
<feature type="chain" id="PRO_0000422017" description="Unsaturated chondroitin disaccharide hydrolase">
    <location>
        <begin position="1"/>
        <end position="396"/>
    </location>
</feature>
<feature type="active site" description="Nucleophile" evidence="1">
    <location>
        <position position="113"/>
    </location>
</feature>
<feature type="active site" description="Proton donor" evidence="1">
    <location>
        <position position="173"/>
    </location>
</feature>
<feature type="binding site" evidence="1">
    <location>
        <position position="113"/>
    </location>
    <ligand>
        <name>substrate</name>
    </ligand>
</feature>
<feature type="binding site" evidence="1">
    <location>
        <position position="173"/>
    </location>
    <ligand>
        <name>substrate</name>
    </ligand>
</feature>
<feature type="binding site" evidence="1">
    <location>
        <position position="231"/>
    </location>
    <ligand>
        <name>substrate</name>
    </ligand>
</feature>
<feature type="binding site" evidence="1">
    <location>
        <position position="233"/>
    </location>
    <ligand>
        <name>substrate</name>
    </ligand>
</feature>
<feature type="binding site" evidence="1">
    <location>
        <position position="245"/>
    </location>
    <ligand>
        <name>substrate</name>
    </ligand>
</feature>
<feature type="binding site" evidence="1">
    <location>
        <position position="249"/>
    </location>
    <ligand>
        <name>substrate</name>
    </ligand>
</feature>
<feature type="binding site" evidence="1">
    <location>
        <position position="363"/>
    </location>
    <ligand>
        <name>substrate</name>
    </ligand>
</feature>
<feature type="binding site" evidence="1">
    <location>
        <position position="366"/>
    </location>
    <ligand>
        <name>substrate</name>
    </ligand>
</feature>
<proteinExistence type="evidence at protein level"/>
<accession>Q8DR77</accession>
<name>UCDH_STRR6</name>
<protein>
    <recommendedName>
        <fullName>Unsaturated chondroitin disaccharide hydrolase</fullName>
        <ecNumber>3.2.1.180</ecNumber>
    </recommendedName>
    <alternativeName>
        <fullName>Unsaturated glucuronyl hydrolase</fullName>
        <shortName>SpnUGL</shortName>
    </alternativeName>
</protein>
<keyword id="KW-0378">Hydrolase</keyword>
<keyword id="KW-1185">Reference proteome</keyword>
<gene>
    <name type="primary">ugl</name>
    <name type="ordered locus">spr0292</name>
</gene>
<dbReference type="EC" id="3.2.1.180"/>
<dbReference type="EMBL" id="AE007317">
    <property type="protein sequence ID" value="AAK99096.1"/>
    <property type="molecule type" value="Genomic_DNA"/>
</dbReference>
<dbReference type="PIR" id="A95038">
    <property type="entry name" value="A95038"/>
</dbReference>
<dbReference type="PIR" id="D97908">
    <property type="entry name" value="D97908"/>
</dbReference>
<dbReference type="RefSeq" id="NP_357886.1">
    <property type="nucleotide sequence ID" value="NC_003098.1"/>
</dbReference>
<dbReference type="RefSeq" id="WP_000592948.1">
    <property type="nucleotide sequence ID" value="NC_003098.1"/>
</dbReference>
<dbReference type="SMR" id="Q8DR77"/>
<dbReference type="STRING" id="171101.spr0292"/>
<dbReference type="CAZy" id="GH88">
    <property type="family name" value="Glycoside Hydrolase Family 88"/>
</dbReference>
<dbReference type="KEGG" id="spr:spr0292"/>
<dbReference type="PATRIC" id="fig|171101.6.peg.329"/>
<dbReference type="eggNOG" id="COG4225">
    <property type="taxonomic scope" value="Bacteria"/>
</dbReference>
<dbReference type="HOGENOM" id="CLU_027158_1_1_9"/>
<dbReference type="BRENDA" id="3.2.1.180">
    <property type="organism ID" value="1960"/>
</dbReference>
<dbReference type="Proteomes" id="UP000000586">
    <property type="component" value="Chromosome"/>
</dbReference>
<dbReference type="GO" id="GO:0052757">
    <property type="term" value="F:chondroitin hydrolase activity"/>
    <property type="evidence" value="ECO:0000314"/>
    <property type="project" value="UniProtKB"/>
</dbReference>
<dbReference type="GO" id="GO:0102212">
    <property type="term" value="F:unsaturated chondroitin disaccharide hydrolase activity"/>
    <property type="evidence" value="ECO:0007669"/>
    <property type="project" value="UniProtKB-EC"/>
</dbReference>
<dbReference type="GO" id="GO:0000272">
    <property type="term" value="P:polysaccharide catabolic process"/>
    <property type="evidence" value="ECO:0000314"/>
    <property type="project" value="UniProtKB"/>
</dbReference>
<dbReference type="FunFam" id="1.50.10.10:FF:000042">
    <property type="entry name" value="Unsaturated chondroitin disaccharide hydrolase"/>
    <property type="match status" value="1"/>
</dbReference>
<dbReference type="Gene3D" id="1.50.10.10">
    <property type="match status" value="1"/>
</dbReference>
<dbReference type="InterPro" id="IPR008928">
    <property type="entry name" value="6-hairpin_glycosidase_sf"/>
</dbReference>
<dbReference type="InterPro" id="IPR012341">
    <property type="entry name" value="6hp_glycosidase-like_sf"/>
</dbReference>
<dbReference type="InterPro" id="IPR010905">
    <property type="entry name" value="Glyco_hydro_88"/>
</dbReference>
<dbReference type="InterPro" id="IPR052369">
    <property type="entry name" value="UG_Glycosaminoglycan_Hydrolase"/>
</dbReference>
<dbReference type="PANTHER" id="PTHR36845">
    <property type="entry name" value="HYDROLASE, PUTATIVE (AFU_ORTHOLOGUE AFUA_7G05090)-RELATED"/>
    <property type="match status" value="1"/>
</dbReference>
<dbReference type="PANTHER" id="PTHR36845:SF1">
    <property type="entry name" value="HYDROLASE, PUTATIVE (AFU_ORTHOLOGUE AFUA_7G05090)-RELATED"/>
    <property type="match status" value="1"/>
</dbReference>
<dbReference type="Pfam" id="PF07470">
    <property type="entry name" value="Glyco_hydro_88"/>
    <property type="match status" value="1"/>
</dbReference>
<dbReference type="SUPFAM" id="SSF48208">
    <property type="entry name" value="Six-hairpin glycosidases"/>
    <property type="match status" value="1"/>
</dbReference>
<evidence type="ECO:0000250" key="1"/>
<evidence type="ECO:0000269" key="2">
    <source>
    </source>
</evidence>
<evidence type="ECO:0000305" key="3"/>
<organism>
    <name type="scientific">Streptococcus pneumoniae (strain ATCC BAA-255 / R6)</name>
    <dbReference type="NCBI Taxonomy" id="171101"/>
    <lineage>
        <taxon>Bacteria</taxon>
        <taxon>Bacillati</taxon>
        <taxon>Bacillota</taxon>
        <taxon>Bacilli</taxon>
        <taxon>Lactobacillales</taxon>
        <taxon>Streptococcaceae</taxon>
        <taxon>Streptococcus</taxon>
    </lineage>
</organism>
<sequence>MIKKVTIEKIKSPERFLEVPLLTKEEVGQAIDKVIRQLELNLDYFKEDFPTPATFDNVYPIMDNTEWTNGFWTGELWLAYEYSQQDAFKNIAHKNVLSFLDRVNKRVELDHHDLGFLYTPSCMAEYKINGDGEAREATLKAADKLIERYQEKGGFIQAWGDLGKKEHYRLIIDCLLNIQLLFFAYQETGDQKYYDIAESHFYASANNVIRDDASSFHTFYFDPETGQPFKGVTRQGYSDDSCWARGQSWGVYGIPLTYRHLKDESCFDLFKGVTNYFLNRLPKDHVSYWDLIFNDGSDQSRDSSATAIAVCGIHEMLKHLPEVDADKDIYKHAMHAMLRSLIEHYANDQFTPGGTSLLHGVYSWHSGKGVDEGNIWGDYYYLEALIRFYKDWNLYW</sequence>